<comment type="function">
    <text>Binds plasminogen, specifically, and in a concentration and lysine-dependent manner. Plasminogen is the precursor of plasmin, a serine protease that cleaves fibrin, fibronectin, laminin and vitronectin. Acquisition of plasminogen/plasmin could enable H.pylori to degrade host components.</text>
</comment>
<comment type="subcellular location">
    <subcellularLocation>
        <location evidence="2">Cell surface</location>
    </subcellularLocation>
    <text evidence="2">The plasminogen-binding region is localized on the surface the bacterium.</text>
</comment>
<comment type="miscellaneous">
    <text>Plasminogen bound to PgbB is capable of being converted to functionally active plasmin.</text>
</comment>
<keyword id="KW-1185">Reference proteome</keyword>
<dbReference type="EMBL" id="AE000511">
    <property type="protein sequence ID" value="AAD07917.1"/>
    <property type="molecule type" value="Genomic_DNA"/>
</dbReference>
<dbReference type="PIR" id="G64627">
    <property type="entry name" value="G64627"/>
</dbReference>
<dbReference type="RefSeq" id="NP_207657.1">
    <property type="nucleotide sequence ID" value="NC_000915.1"/>
</dbReference>
<dbReference type="RefSeq" id="WP_001039566.1">
    <property type="nucleotide sequence ID" value="NC_018939.1"/>
</dbReference>
<dbReference type="STRING" id="85962.HP_0863"/>
<dbReference type="PaxDb" id="85962-C694_04420"/>
<dbReference type="EnsemblBacteria" id="AAD07917">
    <property type="protein sequence ID" value="AAD07917"/>
    <property type="gene ID" value="HP_0863"/>
</dbReference>
<dbReference type="KEGG" id="heo:C694_04420"/>
<dbReference type="KEGG" id="hpy:HP_0863"/>
<dbReference type="PATRIC" id="fig|85962.47.peg.917"/>
<dbReference type="eggNOG" id="ENOG50316V3">
    <property type="taxonomic scope" value="Bacteria"/>
</dbReference>
<dbReference type="InParanoid" id="O25534"/>
<dbReference type="OrthoDB" id="5328932at2"/>
<dbReference type="Proteomes" id="UP000000429">
    <property type="component" value="Chromosome"/>
</dbReference>
<dbReference type="GO" id="GO:0009986">
    <property type="term" value="C:cell surface"/>
    <property type="evidence" value="ECO:0007669"/>
    <property type="project" value="UniProtKB-SubCell"/>
</dbReference>
<dbReference type="Gene3D" id="2.130.10.10">
    <property type="entry name" value="YVTN repeat-like/Quinoprotein amine dehydrogenase"/>
    <property type="match status" value="1"/>
</dbReference>
<dbReference type="InterPro" id="IPR032737">
    <property type="entry name" value="PGBA_C"/>
</dbReference>
<dbReference type="InterPro" id="IPR015943">
    <property type="entry name" value="WD40/YVTN_repeat-like_dom_sf"/>
</dbReference>
<dbReference type="InterPro" id="IPR036322">
    <property type="entry name" value="WD40_repeat_dom_sf"/>
</dbReference>
<dbReference type="Pfam" id="PF15437">
    <property type="entry name" value="PGBA_C"/>
    <property type="match status" value="1"/>
</dbReference>
<dbReference type="SUPFAM" id="SSF50978">
    <property type="entry name" value="WD40 repeat-like"/>
    <property type="match status" value="1"/>
</dbReference>
<dbReference type="PROSITE" id="PS51257">
    <property type="entry name" value="PROKAR_LIPOPROTEIN"/>
    <property type="match status" value="1"/>
</dbReference>
<reference key="1">
    <citation type="journal article" date="1997" name="Nature">
        <title>The complete genome sequence of the gastric pathogen Helicobacter pylori.</title>
        <authorList>
            <person name="Tomb J.-F."/>
            <person name="White O."/>
            <person name="Kerlavage A.R."/>
            <person name="Clayton R.A."/>
            <person name="Sutton G.G."/>
            <person name="Fleischmann R.D."/>
            <person name="Ketchum K.A."/>
            <person name="Klenk H.-P."/>
            <person name="Gill S.R."/>
            <person name="Dougherty B.A."/>
            <person name="Nelson K.E."/>
            <person name="Quackenbush J."/>
            <person name="Zhou L."/>
            <person name="Kirkness E.F."/>
            <person name="Peterson S.N."/>
            <person name="Loftus B.J."/>
            <person name="Richardson D.L."/>
            <person name="Dodson R.J."/>
            <person name="Khalak H.G."/>
            <person name="Glodek A."/>
            <person name="McKenney K."/>
            <person name="FitzGerald L.M."/>
            <person name="Lee N."/>
            <person name="Adams M.D."/>
            <person name="Hickey E.K."/>
            <person name="Berg D.E."/>
            <person name="Gocayne J.D."/>
            <person name="Utterback T.R."/>
            <person name="Peterson J.D."/>
            <person name="Kelley J.M."/>
            <person name="Cotton M.D."/>
            <person name="Weidman J.F."/>
            <person name="Fujii C."/>
            <person name="Bowman C."/>
            <person name="Watthey L."/>
            <person name="Wallin E."/>
            <person name="Hayes W.S."/>
            <person name="Borodovsky M."/>
            <person name="Karp P.D."/>
            <person name="Smith H.O."/>
            <person name="Fraser C.M."/>
            <person name="Venter J.C."/>
        </authorList>
    </citation>
    <scope>NUCLEOTIDE SEQUENCE [LARGE SCALE GENOMIC DNA]</scope>
    <source>
        <strain>ATCC 700392 / 26695</strain>
    </source>
</reference>
<reference key="2">
    <citation type="journal article" date="2004" name="Proc. Natl. Acad. Sci. U.S.A.">
        <title>Molecular cloning and characterization of two Helicobacter pylori genes coding for plasminogen-binding proteins.</title>
        <authorList>
            <person name="Joensson K."/>
            <person name="Guo B.P."/>
            <person name="Monstein H.J."/>
            <person name="Mekalanos J.J."/>
            <person name="Kronvall G."/>
        </authorList>
    </citation>
    <scope>PLASMINOGEN-BINDING ACTIVITY</scope>
    <source>
        <strain>ATCC 700392 / 26695</strain>
        <strain>DSM 4867 / CCUG 17874 / NCTC 11638</strain>
    </source>
</reference>
<accession>O25534</accession>
<organism>
    <name type="scientific">Helicobacter pylori (strain ATCC 700392 / 26695)</name>
    <name type="common">Campylobacter pylori</name>
    <dbReference type="NCBI Taxonomy" id="85962"/>
    <lineage>
        <taxon>Bacteria</taxon>
        <taxon>Pseudomonadati</taxon>
        <taxon>Campylobacterota</taxon>
        <taxon>Epsilonproteobacteria</taxon>
        <taxon>Campylobacterales</taxon>
        <taxon>Helicobacteraceae</taxon>
        <taxon>Helicobacter</taxon>
    </lineage>
</organism>
<proteinExistence type="evidence at protein level"/>
<sequence length="542" mass="61900">MNKPFLILLIALIVFSGCNMRKYFKPAKHQIKGEAYFPNHLQESIVSSNRYGAILKNGAVIGDKGLTQLRIGKNFNYESSFLNESQGFFILAQDCLNKIDKKTNKSKVAKTEETELKLKGVEAEVQDKVCHQVELISNNPNASQQSIVIPLETFALSASVKGNLLAVVLADNSANLYDITSQKLLFSEKGSPSTTINSLMAMPIFMDTVVVFPMLDGRLLVVDYVHGNPTPIRNIVISSDKFFNNITYLIVDGNNMIASTGKRILSVVSGQEFNYDGDIVDLLYDKGTLYVLTLDGQILQMDKSLRELNSVKLPSSLNTIVLNHNKLYSLEKRGYVIEVDLNDFDSYNVYKTPTIGSFKFFSSNRLDKGVFYDKNRVYYDRYYLDYNDFKPKLYPVVEKSASKKSQKGEKGNAPIYLQERHKAKENKQPLEENKVKPRNSGFEEEEVKTRRPEPIRDQNNATQQGETKNNESKNAPVLKENAAKKEVPKPNSKEEKRRLKEEKKKAKAEQRAREFEQRAREHQERDEKELEERRKALEMNKK</sequence>
<evidence type="ECO:0000256" key="1">
    <source>
        <dbReference type="SAM" id="MobiDB-lite"/>
    </source>
</evidence>
<evidence type="ECO:0000305" key="2"/>
<name>PGBB_HELPY</name>
<feature type="chain" id="PRO_0000058353" description="Plasminogen-binding protein PgbB">
    <location>
        <begin position="1"/>
        <end position="542"/>
    </location>
</feature>
<feature type="region of interest" description="Disordered" evidence="1">
    <location>
        <begin position="399"/>
        <end position="542"/>
    </location>
</feature>
<feature type="compositionally biased region" description="Basic and acidic residues" evidence="1">
    <location>
        <begin position="418"/>
        <end position="435"/>
    </location>
</feature>
<feature type="compositionally biased region" description="Basic and acidic residues" evidence="1">
    <location>
        <begin position="447"/>
        <end position="456"/>
    </location>
</feature>
<feature type="compositionally biased region" description="Polar residues" evidence="1">
    <location>
        <begin position="457"/>
        <end position="467"/>
    </location>
</feature>
<feature type="compositionally biased region" description="Basic and acidic residues" evidence="1">
    <location>
        <begin position="481"/>
        <end position="542"/>
    </location>
</feature>
<gene>
    <name type="primary">pgbB</name>
    <name type="ordered locus">HP_0863</name>
</gene>
<protein>
    <recommendedName>
        <fullName>Plasminogen-binding protein PgbB</fullName>
    </recommendedName>
</protein>